<comment type="function">
    <text evidence="1">Catalyzes the reversible interconversion of serine and glycine with tetrahydrofolate (THF) serving as the one-carbon carrier. This reaction serves as the major source of one-carbon groups required for the biosynthesis of purines, thymidylate, methionine, and other important biomolecules. Also exhibits THF-independent aldolase activity toward beta-hydroxyamino acids, producing glycine and aldehydes, via a retro-aldol mechanism.</text>
</comment>
<comment type="catalytic activity">
    <reaction evidence="1">
        <text>(6R)-5,10-methylene-5,6,7,8-tetrahydrofolate + glycine + H2O = (6S)-5,6,7,8-tetrahydrofolate + L-serine</text>
        <dbReference type="Rhea" id="RHEA:15481"/>
        <dbReference type="ChEBI" id="CHEBI:15377"/>
        <dbReference type="ChEBI" id="CHEBI:15636"/>
        <dbReference type="ChEBI" id="CHEBI:33384"/>
        <dbReference type="ChEBI" id="CHEBI:57305"/>
        <dbReference type="ChEBI" id="CHEBI:57453"/>
        <dbReference type="EC" id="2.1.2.1"/>
    </reaction>
</comment>
<comment type="cofactor">
    <cofactor evidence="1">
        <name>pyridoxal 5'-phosphate</name>
        <dbReference type="ChEBI" id="CHEBI:597326"/>
    </cofactor>
</comment>
<comment type="pathway">
    <text evidence="1">One-carbon metabolism; tetrahydrofolate interconversion.</text>
</comment>
<comment type="pathway">
    <text evidence="1">Amino-acid biosynthesis; glycine biosynthesis; glycine from L-serine: step 1/1.</text>
</comment>
<comment type="subunit">
    <text evidence="1">Homodimer.</text>
</comment>
<comment type="subcellular location">
    <subcellularLocation>
        <location evidence="1">Cytoplasm</location>
    </subcellularLocation>
</comment>
<comment type="similarity">
    <text evidence="1">Belongs to the SHMT family.</text>
</comment>
<dbReference type="EC" id="2.1.2.1" evidence="1"/>
<dbReference type="EMBL" id="BX569689">
    <property type="protein sequence ID" value="CAE06774.1"/>
    <property type="molecule type" value="Genomic_DNA"/>
</dbReference>
<dbReference type="RefSeq" id="WP_011127135.1">
    <property type="nucleotide sequence ID" value="NC_005070.1"/>
</dbReference>
<dbReference type="SMR" id="Q7U9J7"/>
<dbReference type="STRING" id="84588.SYNW0259"/>
<dbReference type="KEGG" id="syw:SYNW0259"/>
<dbReference type="eggNOG" id="COG0112">
    <property type="taxonomic scope" value="Bacteria"/>
</dbReference>
<dbReference type="HOGENOM" id="CLU_022477_2_1_3"/>
<dbReference type="UniPathway" id="UPA00193"/>
<dbReference type="UniPathway" id="UPA00288">
    <property type="reaction ID" value="UER01023"/>
</dbReference>
<dbReference type="Proteomes" id="UP000001422">
    <property type="component" value="Chromosome"/>
</dbReference>
<dbReference type="GO" id="GO:0005829">
    <property type="term" value="C:cytosol"/>
    <property type="evidence" value="ECO:0007669"/>
    <property type="project" value="TreeGrafter"/>
</dbReference>
<dbReference type="GO" id="GO:0004372">
    <property type="term" value="F:glycine hydroxymethyltransferase activity"/>
    <property type="evidence" value="ECO:0007669"/>
    <property type="project" value="UniProtKB-UniRule"/>
</dbReference>
<dbReference type="GO" id="GO:0030170">
    <property type="term" value="F:pyridoxal phosphate binding"/>
    <property type="evidence" value="ECO:0007669"/>
    <property type="project" value="UniProtKB-UniRule"/>
</dbReference>
<dbReference type="GO" id="GO:0019264">
    <property type="term" value="P:glycine biosynthetic process from serine"/>
    <property type="evidence" value="ECO:0007669"/>
    <property type="project" value="UniProtKB-UniRule"/>
</dbReference>
<dbReference type="GO" id="GO:0035999">
    <property type="term" value="P:tetrahydrofolate interconversion"/>
    <property type="evidence" value="ECO:0007669"/>
    <property type="project" value="UniProtKB-UniRule"/>
</dbReference>
<dbReference type="CDD" id="cd00378">
    <property type="entry name" value="SHMT"/>
    <property type="match status" value="1"/>
</dbReference>
<dbReference type="FunFam" id="3.40.640.10:FF:000001">
    <property type="entry name" value="Serine hydroxymethyltransferase"/>
    <property type="match status" value="1"/>
</dbReference>
<dbReference type="Gene3D" id="3.90.1150.10">
    <property type="entry name" value="Aspartate Aminotransferase, domain 1"/>
    <property type="match status" value="1"/>
</dbReference>
<dbReference type="Gene3D" id="3.40.640.10">
    <property type="entry name" value="Type I PLP-dependent aspartate aminotransferase-like (Major domain)"/>
    <property type="match status" value="1"/>
</dbReference>
<dbReference type="HAMAP" id="MF_00051">
    <property type="entry name" value="SHMT"/>
    <property type="match status" value="1"/>
</dbReference>
<dbReference type="InterPro" id="IPR015424">
    <property type="entry name" value="PyrdxlP-dep_Trfase"/>
</dbReference>
<dbReference type="InterPro" id="IPR015421">
    <property type="entry name" value="PyrdxlP-dep_Trfase_major"/>
</dbReference>
<dbReference type="InterPro" id="IPR015422">
    <property type="entry name" value="PyrdxlP-dep_Trfase_small"/>
</dbReference>
<dbReference type="InterPro" id="IPR001085">
    <property type="entry name" value="Ser_HO-MeTrfase"/>
</dbReference>
<dbReference type="InterPro" id="IPR049943">
    <property type="entry name" value="Ser_HO-MeTrfase-like"/>
</dbReference>
<dbReference type="InterPro" id="IPR019798">
    <property type="entry name" value="Ser_HO-MeTrfase_PLP_BS"/>
</dbReference>
<dbReference type="InterPro" id="IPR039429">
    <property type="entry name" value="SHMT-like_dom"/>
</dbReference>
<dbReference type="NCBIfam" id="NF000586">
    <property type="entry name" value="PRK00011.1"/>
    <property type="match status" value="1"/>
</dbReference>
<dbReference type="PANTHER" id="PTHR11680">
    <property type="entry name" value="SERINE HYDROXYMETHYLTRANSFERASE"/>
    <property type="match status" value="1"/>
</dbReference>
<dbReference type="PANTHER" id="PTHR11680:SF35">
    <property type="entry name" value="SERINE HYDROXYMETHYLTRANSFERASE 1"/>
    <property type="match status" value="1"/>
</dbReference>
<dbReference type="Pfam" id="PF00464">
    <property type="entry name" value="SHMT"/>
    <property type="match status" value="1"/>
</dbReference>
<dbReference type="PIRSF" id="PIRSF000412">
    <property type="entry name" value="SHMT"/>
    <property type="match status" value="1"/>
</dbReference>
<dbReference type="SUPFAM" id="SSF53383">
    <property type="entry name" value="PLP-dependent transferases"/>
    <property type="match status" value="1"/>
</dbReference>
<dbReference type="PROSITE" id="PS00096">
    <property type="entry name" value="SHMT"/>
    <property type="match status" value="1"/>
</dbReference>
<organism>
    <name type="scientific">Parasynechococcus marenigrum (strain WH8102)</name>
    <dbReference type="NCBI Taxonomy" id="84588"/>
    <lineage>
        <taxon>Bacteria</taxon>
        <taxon>Bacillati</taxon>
        <taxon>Cyanobacteriota</taxon>
        <taxon>Cyanophyceae</taxon>
        <taxon>Synechococcales</taxon>
        <taxon>Prochlorococcaceae</taxon>
        <taxon>Parasynechococcus</taxon>
        <taxon>Parasynechococcus marenigrum</taxon>
    </lineage>
</organism>
<gene>
    <name evidence="1" type="primary">glyA</name>
    <name type="ordered locus">SYNW0259</name>
</gene>
<keyword id="KW-0028">Amino-acid biosynthesis</keyword>
<keyword id="KW-0963">Cytoplasm</keyword>
<keyword id="KW-0554">One-carbon metabolism</keyword>
<keyword id="KW-0663">Pyridoxal phosphate</keyword>
<keyword id="KW-0808">Transferase</keyword>
<evidence type="ECO:0000255" key="1">
    <source>
        <dbReference type="HAMAP-Rule" id="MF_00051"/>
    </source>
</evidence>
<sequence>MSDSTASSINKGLAAADPAIAALIEKEQQRQETHLELIASENFASRAVMDAQGSVLTNKYAEGLPSKRYYGGCEHVDAIEELAIERAKELFGAAWANVQPHSGAQANFAVFLALLQPGDTIMGLDLSHGGHLTHGSPVNVSGKWFNVVQYGVDRETQRLDMEAIRQLALEHKPKLIVCGFSAYPRTIDFAAFRAIADEVGAFLLADMAHIAGLVAAGVHPSPVPHCDVVTTTTHKTLRGPRGGLILCRDADFAKKFDKAVFPGSQGGPLEHVIAAKAVAFGEALQPAFKTYSQHVVANAAALAERLIARGIDVVSGGTDNHVVLLDLRSVGMTGKVADLLVSDVHITANKNTVPFDPESPFVTSGLRLGTAALTTRGFDAGAFREVADVIADRLLNPEDDAVQQQCLRRVEALCQRFPLYAAARQPALA</sequence>
<proteinExistence type="inferred from homology"/>
<name>GLYA_PARMW</name>
<accession>Q7U9J7</accession>
<reference key="1">
    <citation type="journal article" date="2003" name="Nature">
        <title>The genome of a motile marine Synechococcus.</title>
        <authorList>
            <person name="Palenik B."/>
            <person name="Brahamsha B."/>
            <person name="Larimer F.W."/>
            <person name="Land M.L."/>
            <person name="Hauser L."/>
            <person name="Chain P."/>
            <person name="Lamerdin J.E."/>
            <person name="Regala W."/>
            <person name="Allen E.E."/>
            <person name="McCarren J."/>
            <person name="Paulsen I.T."/>
            <person name="Dufresne A."/>
            <person name="Partensky F."/>
            <person name="Webb E.A."/>
            <person name="Waterbury J."/>
        </authorList>
    </citation>
    <scope>NUCLEOTIDE SEQUENCE [LARGE SCALE GENOMIC DNA]</scope>
    <source>
        <strain>WH8102</strain>
    </source>
</reference>
<protein>
    <recommendedName>
        <fullName evidence="1">Serine hydroxymethyltransferase</fullName>
        <shortName evidence="1">SHMT</shortName>
        <shortName evidence="1">Serine methylase</shortName>
        <ecNumber evidence="1">2.1.2.1</ecNumber>
    </recommendedName>
</protein>
<feature type="chain" id="PRO_0000113682" description="Serine hydroxymethyltransferase">
    <location>
        <begin position="1"/>
        <end position="429"/>
    </location>
</feature>
<feature type="binding site" evidence="1">
    <location>
        <position position="126"/>
    </location>
    <ligand>
        <name>(6S)-5,6,7,8-tetrahydrofolate</name>
        <dbReference type="ChEBI" id="CHEBI:57453"/>
    </ligand>
</feature>
<feature type="binding site" evidence="1">
    <location>
        <begin position="130"/>
        <end position="132"/>
    </location>
    <ligand>
        <name>(6S)-5,6,7,8-tetrahydrofolate</name>
        <dbReference type="ChEBI" id="CHEBI:57453"/>
    </ligand>
</feature>
<feature type="binding site" evidence="1">
    <location>
        <begin position="359"/>
        <end position="361"/>
    </location>
    <ligand>
        <name>(6S)-5,6,7,8-tetrahydrofolate</name>
        <dbReference type="ChEBI" id="CHEBI:57453"/>
    </ligand>
</feature>
<feature type="site" description="Plays an important role in substrate specificity" evidence="1">
    <location>
        <position position="234"/>
    </location>
</feature>
<feature type="modified residue" description="N6-(pyridoxal phosphate)lysine" evidence="1">
    <location>
        <position position="235"/>
    </location>
</feature>